<comment type="function">
    <text evidence="1 5">Acts partially redundantly with other irx members in neural patterning. Required for formation of the posterior forebrain, midbrain, hindbrain, and to a lesser extent, spinal cord. Patterns the neuroectoderm in both the anterior/posterior and dorsal/ventral axes. Does not appear to play a role in pronephros kidney development.</text>
</comment>
<comment type="subcellular location">
    <subcellularLocation>
        <location evidence="2 6">Nucleus</location>
    </subcellularLocation>
</comment>
<comment type="tissue specificity">
    <text evidence="5">Expressed in the neural plate in overlapping patterns with other irx members, which all share an anterior border of expression. Broadly expressed in the tailbud rhombencephalon (hindbrain). Outside the nervous system and at tailbud stages, expressed in the developing otic vesicle, branchial arches and prospective heart region.</text>
</comment>
<comment type="similarity">
    <text evidence="2">Belongs to the TALE/IRO homeobox family.</text>
</comment>
<organism>
    <name type="scientific">Xenopus tropicalis</name>
    <name type="common">Western clawed frog</name>
    <name type="synonym">Silurana tropicalis</name>
    <dbReference type="NCBI Taxonomy" id="8364"/>
    <lineage>
        <taxon>Eukaryota</taxon>
        <taxon>Metazoa</taxon>
        <taxon>Chordata</taxon>
        <taxon>Craniata</taxon>
        <taxon>Vertebrata</taxon>
        <taxon>Euteleostomi</taxon>
        <taxon>Amphibia</taxon>
        <taxon>Batrachia</taxon>
        <taxon>Anura</taxon>
        <taxon>Pipoidea</taxon>
        <taxon>Pipidae</taxon>
        <taxon>Xenopodinae</taxon>
        <taxon>Xenopus</taxon>
        <taxon>Silurana</taxon>
    </lineage>
</organism>
<accession>Q688D0</accession>
<keyword id="KW-0217">Developmental protein</keyword>
<keyword id="KW-0221">Differentiation</keyword>
<keyword id="KW-0238">DNA-binding</keyword>
<keyword id="KW-0371">Homeobox</keyword>
<keyword id="KW-0524">Neurogenesis</keyword>
<keyword id="KW-0539">Nucleus</keyword>
<keyword id="KW-1185">Reference proteome</keyword>
<keyword id="KW-0804">Transcription</keyword>
<keyword id="KW-0805">Transcription regulation</keyword>
<evidence type="ECO:0000250" key="1">
    <source>
        <dbReference type="UniProtKB" id="Q90XW6"/>
    </source>
</evidence>
<evidence type="ECO:0000255" key="2"/>
<evidence type="ECO:0000255" key="3">
    <source>
        <dbReference type="PROSITE-ProRule" id="PRU00108"/>
    </source>
</evidence>
<evidence type="ECO:0000256" key="4">
    <source>
        <dbReference type="SAM" id="MobiDB-lite"/>
    </source>
</evidence>
<evidence type="ECO:0000269" key="5">
    <source>
    </source>
</evidence>
<evidence type="ECO:0000305" key="6"/>
<evidence type="ECO:0000312" key="7">
    <source>
        <dbReference type="EMBL" id="AAU12854.1"/>
    </source>
</evidence>
<protein>
    <recommendedName>
        <fullName evidence="1">Iroquois-class homeodomain protein irx-4</fullName>
    </recommendedName>
    <alternativeName>
        <fullName evidence="1">Iroquois homeobox protein 4</fullName>
    </alternativeName>
</protein>
<dbReference type="EMBL" id="AC149071">
    <property type="protein sequence ID" value="AAU12854.1"/>
    <property type="molecule type" value="Genomic_DNA"/>
</dbReference>
<dbReference type="SMR" id="Q688D0"/>
<dbReference type="FunCoup" id="Q688D0">
    <property type="interactions" value="788"/>
</dbReference>
<dbReference type="STRING" id="8364.ENSXETP00000016642"/>
<dbReference type="PaxDb" id="8364-ENSXETP00000019512"/>
<dbReference type="eggNOG" id="KOG0773">
    <property type="taxonomic scope" value="Eukaryota"/>
</dbReference>
<dbReference type="HOGENOM" id="CLU_042927_1_1_1"/>
<dbReference type="InParanoid" id="Q688D0"/>
<dbReference type="TreeFam" id="TF319371"/>
<dbReference type="Proteomes" id="UP000008143">
    <property type="component" value="Unplaced"/>
</dbReference>
<dbReference type="Bgee" id="ENSXETG00000008892">
    <property type="expression patterns" value="Expressed in heart and 2 other cell types or tissues"/>
</dbReference>
<dbReference type="GO" id="GO:0005634">
    <property type="term" value="C:nucleus"/>
    <property type="evidence" value="ECO:0000250"/>
    <property type="project" value="UniProtKB"/>
</dbReference>
<dbReference type="GO" id="GO:0003677">
    <property type="term" value="F:DNA binding"/>
    <property type="evidence" value="ECO:0007669"/>
    <property type="project" value="UniProtKB-KW"/>
</dbReference>
<dbReference type="GO" id="GO:0000981">
    <property type="term" value="F:DNA-binding transcription factor activity, RNA polymerase II-specific"/>
    <property type="evidence" value="ECO:0007669"/>
    <property type="project" value="InterPro"/>
</dbReference>
<dbReference type="GO" id="GO:0007420">
    <property type="term" value="P:brain development"/>
    <property type="evidence" value="ECO:0007669"/>
    <property type="project" value="UniProtKB-ARBA"/>
</dbReference>
<dbReference type="GO" id="GO:0030154">
    <property type="term" value="P:cell differentiation"/>
    <property type="evidence" value="ECO:0007669"/>
    <property type="project" value="UniProtKB-KW"/>
</dbReference>
<dbReference type="GO" id="GO:0009953">
    <property type="term" value="P:dorsal/ventral pattern formation"/>
    <property type="evidence" value="ECO:0007669"/>
    <property type="project" value="UniProtKB-ARBA"/>
</dbReference>
<dbReference type="GO" id="GO:0007507">
    <property type="term" value="P:heart development"/>
    <property type="evidence" value="ECO:0000250"/>
    <property type="project" value="UniProtKB"/>
</dbReference>
<dbReference type="GO" id="GO:0009954">
    <property type="term" value="P:proximal/distal pattern formation"/>
    <property type="evidence" value="ECO:0007669"/>
    <property type="project" value="UniProtKB-ARBA"/>
</dbReference>
<dbReference type="CDD" id="cd00086">
    <property type="entry name" value="homeodomain"/>
    <property type="match status" value="1"/>
</dbReference>
<dbReference type="FunFam" id="1.10.10.60:FF:000003">
    <property type="entry name" value="Iroquois-class homeobox protein IRX"/>
    <property type="match status" value="1"/>
</dbReference>
<dbReference type="Gene3D" id="1.10.10.60">
    <property type="entry name" value="Homeodomain-like"/>
    <property type="match status" value="1"/>
</dbReference>
<dbReference type="InterPro" id="IPR001356">
    <property type="entry name" value="HD"/>
</dbReference>
<dbReference type="InterPro" id="IPR017970">
    <property type="entry name" value="Homeobox_CS"/>
</dbReference>
<dbReference type="InterPro" id="IPR009057">
    <property type="entry name" value="Homeodomain-like_sf"/>
</dbReference>
<dbReference type="InterPro" id="IPR003893">
    <property type="entry name" value="Iroquois_homeo"/>
</dbReference>
<dbReference type="InterPro" id="IPR008422">
    <property type="entry name" value="KN_HD"/>
</dbReference>
<dbReference type="PANTHER" id="PTHR11211">
    <property type="entry name" value="IROQUOIS-CLASS HOMEODOMAIN PROTEIN IRX"/>
    <property type="match status" value="1"/>
</dbReference>
<dbReference type="PANTHER" id="PTHR11211:SF16">
    <property type="entry name" value="IROQUOIS-CLASS HOMEODOMAIN PROTEIN IRX-4"/>
    <property type="match status" value="1"/>
</dbReference>
<dbReference type="Pfam" id="PF05920">
    <property type="entry name" value="Homeobox_KN"/>
    <property type="match status" value="1"/>
</dbReference>
<dbReference type="SMART" id="SM00389">
    <property type="entry name" value="HOX"/>
    <property type="match status" value="1"/>
</dbReference>
<dbReference type="SMART" id="SM00548">
    <property type="entry name" value="IRO"/>
    <property type="match status" value="1"/>
</dbReference>
<dbReference type="SUPFAM" id="SSF46689">
    <property type="entry name" value="Homeodomain-like"/>
    <property type="match status" value="1"/>
</dbReference>
<dbReference type="PROSITE" id="PS00027">
    <property type="entry name" value="HOMEOBOX_1"/>
    <property type="match status" value="1"/>
</dbReference>
<dbReference type="PROSITE" id="PS50071">
    <property type="entry name" value="HOMEOBOX_2"/>
    <property type="match status" value="1"/>
</dbReference>
<gene>
    <name evidence="1" type="primary">irx4</name>
</gene>
<feature type="chain" id="PRO_0000388720" description="Iroquois-class homeodomain protein irx-4">
    <location>
        <begin position="1"/>
        <end position="496"/>
    </location>
</feature>
<feature type="DNA-binding region" description="Homeobox; TALE-type" evidence="3">
    <location>
        <begin position="141"/>
        <end position="203"/>
    </location>
</feature>
<feature type="region of interest" description="Disordered" evidence="4">
    <location>
        <begin position="203"/>
        <end position="236"/>
    </location>
</feature>
<feature type="compositionally biased region" description="Acidic residues" evidence="4">
    <location>
        <begin position="221"/>
        <end position="231"/>
    </location>
</feature>
<reference evidence="7" key="1">
    <citation type="submission" date="2004-09" db="EMBL/GenBank/DDBJ databases">
        <title>Sequence of Xenopus tropicalis development genes.</title>
        <authorList>
            <person name="Qin S."/>
            <person name="Dors M."/>
            <person name="Johnson E."/>
            <person name="Bloom S."/>
            <person name="Hood L."/>
            <person name="Rowen L."/>
        </authorList>
    </citation>
    <scope>NUCLEOTIDE SEQUENCE [GENOMIC DNA]</scope>
</reference>
<reference evidence="6" key="2">
    <citation type="journal article" date="2009" name="Dev. Biol.">
        <title>The Xenopus Irx genes are essential for neural patterning and define the border between prethalamus and thalamus through mutual antagonism with the anterior repressors Fezf and Arx.</title>
        <authorList>
            <person name="Rodriguez-Seguel E."/>
            <person name="Alarcon P."/>
            <person name="Gomez-Skarmeta J.L."/>
        </authorList>
    </citation>
    <scope>FUNCTION</scope>
    <scope>TISSUE SPECIFICITY</scope>
</reference>
<proteinExistence type="evidence at transcript level"/>
<sequence length="496" mass="55393">MSYPQFGYPYSSTPQFLMTTNSLSTCCESSGRSLSDSAAAASAQTPVYCPVYESRLLATARHELNSAAALGVYGSPYTSTQGYGNYVTYGADASAFYSLNAFESKDGTGSAHAGIPQTAAYYPYEHTLSQYQYDRYGTMDGSTRRKNATRETTSTLKAWLQEHRKNPYPTKGEKIMLAIITKMTLTQVSTWFANARRRLKKENKMTWPPRNKCSDEKRPYDEEEEEEEEEDSQKATIKNEKKIVDEEVAREDKALDLSDLEDFDAIESESSECELKQPFHHQPQDGHQLRQRDCVNDHCKDVILKMPITPAANQELDRTKICHKPGVDQCEQEVLRGRQRGGESKACFQQQQILDSKPRIWSLAHTATSLNQTEYPSCMLKHQGLSSPSSSSSSSAVSTPVCVIDRRQDSPVTSLRNWVDGVFHDPLFRHSTLNQALTNTTVSWATTKGTLIDSGSLGRSVGNPTNAIKGQLPNIPHDTNKEFIAFQKSGSKMFCS</sequence>
<name>IRX4_XENTR</name>